<name>PAP1_VACCA</name>
<protein>
    <recommendedName>
        <fullName>Poly(A) polymerase catalytic subunit</fullName>
        <ecNumber>2.7.7.19</ecNumber>
    </recommendedName>
    <alternativeName>
        <fullName>Poly(A) polymerase large subunit</fullName>
        <shortName>PAP-L</shortName>
    </alternativeName>
    <alternativeName>
        <fullName>VP55</fullName>
    </alternativeName>
</protein>
<accession>O57184</accession>
<keyword id="KW-0067">ATP-binding</keyword>
<keyword id="KW-0106">Calcium</keyword>
<keyword id="KW-0244">Early protein</keyword>
<keyword id="KW-0479">Metal-binding</keyword>
<keyword id="KW-0507">mRNA processing</keyword>
<keyword id="KW-0547">Nucleotide-binding</keyword>
<keyword id="KW-0804">Transcription</keyword>
<keyword id="KW-0808">Transferase</keyword>
<organismHost>
    <name type="scientific">Homo sapiens</name>
    <name type="common">Human</name>
    <dbReference type="NCBI Taxonomy" id="9606"/>
</organismHost>
<gene>
    <name type="primary">OPG063</name>
    <name type="synonym">PAPL</name>
    <name type="ordered locus">MVA048L</name>
    <name type="ordered locus">ACAM3000_MVA_048</name>
</gene>
<comment type="function">
    <text evidence="1">Polymerase that creates the 3'-poly(A) tail of mRNA's.</text>
</comment>
<comment type="catalytic activity">
    <reaction evidence="1">
        <text>RNA(n) + ATP = RNA(n)-3'-adenine ribonucleotide + diphosphate</text>
        <dbReference type="Rhea" id="RHEA:11332"/>
        <dbReference type="Rhea" id="RHEA-COMP:14527"/>
        <dbReference type="Rhea" id="RHEA-COMP:17347"/>
        <dbReference type="ChEBI" id="CHEBI:30616"/>
        <dbReference type="ChEBI" id="CHEBI:33019"/>
        <dbReference type="ChEBI" id="CHEBI:140395"/>
        <dbReference type="ChEBI" id="CHEBI:173115"/>
        <dbReference type="EC" id="2.7.7.19"/>
    </reaction>
</comment>
<comment type="subunit">
    <text evidence="1">Heterodimer of a large (catalytic) subunit and a small (regulatory) subunit.</text>
</comment>
<comment type="induction">
    <text evidence="1">Expressed in the early phase of the viral replicative cycle.</text>
</comment>
<comment type="similarity">
    <text evidence="3">Belongs to the poxviridae poly(A) polymerase catalytic subunit family.</text>
</comment>
<sequence length="479" mass="55566">MNRNPDQNTFPNITLKIIETYLGRVPSVNEYHMLKLQARNIQKITVFNKDIFVSLVKKNKKRFFSDVDTSASEIKDRILSYFSKQTQTYNIGKLFTIIELQSVLVTTYTDILGVLTIKAPNVISSKISYNVTSMEELARDMLNSMNVAVIDKAKVMGRHNVSSLVKNVNKLMEEYLRRHNKSCICYGSYSLYLINPNIRYGDIDILQTNSRTFLIDLAFLIKFITGNNIILSKIPYLRNYMVIKDENDNHIIDSFNIRQDTMNVVPKIFIDNIYIVDPTFQLLNMIKMFSQIDRLEDLSKDPEKFNARMATMLEYVRYTHGIVFDGKRNNMPMKCIIDENNRIVTVTTKDYFSFKKCLVYLDENVLSSDILDLNADTSCDFESVTNSVYLIHDNIMYTYFSNTILLSDKGKVHEISARGLCAHILLYQMLTSGEYKQCLSDLLNSMMNRDKIPIYSHTERDKKPGRHGFINIEKDIIVF</sequence>
<organism>
    <name type="scientific">Vaccinia virus (strain Ankara)</name>
    <name type="common">VACV</name>
    <dbReference type="NCBI Taxonomy" id="126794"/>
    <lineage>
        <taxon>Viruses</taxon>
        <taxon>Varidnaviria</taxon>
        <taxon>Bamfordvirae</taxon>
        <taxon>Nucleocytoviricota</taxon>
        <taxon>Pokkesviricetes</taxon>
        <taxon>Chitovirales</taxon>
        <taxon>Poxviridae</taxon>
        <taxon>Chordopoxvirinae</taxon>
        <taxon>Orthopoxvirus</taxon>
        <taxon>Vaccinia virus</taxon>
    </lineage>
</organism>
<dbReference type="EC" id="2.7.7.19"/>
<dbReference type="EMBL" id="U94848">
    <property type="protein sequence ID" value="AAB96426.1"/>
    <property type="molecule type" value="Genomic_DNA"/>
</dbReference>
<dbReference type="EMBL" id="AY603355">
    <property type="protein sequence ID" value="AAT10446.1"/>
    <property type="molecule type" value="Genomic_DNA"/>
</dbReference>
<dbReference type="PIR" id="T30794">
    <property type="entry name" value="T30794"/>
</dbReference>
<dbReference type="SMR" id="O57184"/>
<dbReference type="Proteomes" id="UP000159908">
    <property type="component" value="Segment"/>
</dbReference>
<dbReference type="Proteomes" id="UP000172909">
    <property type="component" value="Segment"/>
</dbReference>
<dbReference type="GO" id="GO:0005524">
    <property type="term" value="F:ATP binding"/>
    <property type="evidence" value="ECO:0007669"/>
    <property type="project" value="UniProtKB-KW"/>
</dbReference>
<dbReference type="GO" id="GO:0046872">
    <property type="term" value="F:metal ion binding"/>
    <property type="evidence" value="ECO:0007669"/>
    <property type="project" value="UniProtKB-KW"/>
</dbReference>
<dbReference type="GO" id="GO:1990817">
    <property type="term" value="F:poly(A) RNA polymerase activity"/>
    <property type="evidence" value="ECO:0007669"/>
    <property type="project" value="UniProtKB-EC"/>
</dbReference>
<dbReference type="GO" id="GO:0006397">
    <property type="term" value="P:mRNA processing"/>
    <property type="evidence" value="ECO:0007669"/>
    <property type="project" value="UniProtKB-KW"/>
</dbReference>
<dbReference type="CDD" id="cd20919">
    <property type="entry name" value="polyA_pol_Pox"/>
    <property type="match status" value="1"/>
</dbReference>
<dbReference type="Gene3D" id="1.20.1270.320">
    <property type="entry name" value="Poxvirus poly(A) polymerase, N domain"/>
    <property type="match status" value="1"/>
</dbReference>
<dbReference type="Gene3D" id="3.30.460.60">
    <property type="entry name" value="Poxvirus poly(A) polymerase, nucleotidyltransferase domain"/>
    <property type="match status" value="1"/>
</dbReference>
<dbReference type="InterPro" id="IPR004976">
    <property type="entry name" value="PolyA_pol_cat_Poxvir"/>
</dbReference>
<dbReference type="InterPro" id="IPR037265">
    <property type="entry name" value="PolyA_pol_cat_sf"/>
</dbReference>
<dbReference type="InterPro" id="IPR024231">
    <property type="entry name" value="PolyA_pol_nucTrfase_Poxvir"/>
</dbReference>
<dbReference type="InterPro" id="IPR038419">
    <property type="entry name" value="PolyA_pol_nucTrfase_sf_Poxvir"/>
</dbReference>
<dbReference type="InterPro" id="IPR024397">
    <property type="entry name" value="Poxvirus_polyA_pol_cat_C"/>
</dbReference>
<dbReference type="InterPro" id="IPR024398">
    <property type="entry name" value="Poxvirus_polyA_pol_cat_N"/>
</dbReference>
<dbReference type="InterPro" id="IPR038337">
    <property type="entry name" value="Poxvirus_polyA_pol_cat_N_sf"/>
</dbReference>
<dbReference type="Pfam" id="PF03296">
    <property type="entry name" value="Pox_polyA_pol"/>
    <property type="match status" value="1"/>
</dbReference>
<dbReference type="Pfam" id="PF12629">
    <property type="entry name" value="Pox_polyA_pol_C"/>
    <property type="match status" value="1"/>
</dbReference>
<dbReference type="Pfam" id="PF12630">
    <property type="entry name" value="Pox_polyA_pol_N"/>
    <property type="match status" value="1"/>
</dbReference>
<dbReference type="PIRSF" id="PIRSF015693">
    <property type="entry name" value="VAC-48L_nuct"/>
    <property type="match status" value="1"/>
</dbReference>
<dbReference type="SUPFAM" id="SSF160957">
    <property type="entry name" value="Poly(A) polymerase catalytic subunit-like"/>
    <property type="match status" value="1"/>
</dbReference>
<reference key="1">
    <citation type="journal article" date="1998" name="Virology">
        <title>The complete genomic sequence of the modified vaccinia Ankara strain: comparison with other orthopoxviruses.</title>
        <authorList>
            <person name="Antoine G."/>
            <person name="Scheiflinger F."/>
            <person name="Dorner F."/>
            <person name="Falkner F.G."/>
        </authorList>
    </citation>
    <scope>NUCLEOTIDE SEQUENCE [LARGE SCALE GENOMIC DNA]</scope>
</reference>
<reference key="2">
    <citation type="submission" date="2004-04" db="EMBL/GenBank/DDBJ databases">
        <authorList>
            <person name="Esposito J.J."/>
            <person name="Frace M."/>
            <person name="Sammons S.A."/>
            <person name="Olsen-Rasmussen M.S."/>
            <person name="Osborne J."/>
            <person name="Khristova M."/>
            <person name="Wohlhueter R.M."/>
        </authorList>
    </citation>
    <scope>NUCLEOTIDE SEQUENCE [LARGE SCALE GENOMIC DNA]</scope>
    <source>
        <strain>Isolate Acambis 3000</strain>
    </source>
</reference>
<evidence type="ECO:0000250" key="1">
    <source>
        <dbReference type="UniProtKB" id="P23371"/>
    </source>
</evidence>
<evidence type="ECO:0000255" key="2">
    <source>
        <dbReference type="PIRSR" id="PIRSR015693-50"/>
    </source>
</evidence>
<evidence type="ECO:0000305" key="3"/>
<feature type="chain" id="PRO_0000099105" description="Poly(A) polymerase catalytic subunit">
    <location>
        <begin position="1"/>
        <end position="479"/>
    </location>
</feature>
<feature type="active site" evidence="2">
    <location>
        <position position="202"/>
    </location>
</feature>
<feature type="active site" evidence="2">
    <location>
        <position position="204"/>
    </location>
</feature>
<feature type="binding site" evidence="1">
    <location>
        <position position="202"/>
    </location>
    <ligand>
        <name>Ca(2+)</name>
        <dbReference type="ChEBI" id="CHEBI:29108"/>
        <label>1</label>
    </ligand>
</feature>
<feature type="binding site" evidence="1">
    <location>
        <position position="202"/>
    </location>
    <ligand>
        <name>Ca(2+)</name>
        <dbReference type="ChEBI" id="CHEBI:29108"/>
        <label>2</label>
    </ligand>
</feature>
<feature type="binding site" evidence="1">
    <location>
        <position position="204"/>
    </location>
    <ligand>
        <name>Ca(2+)</name>
        <dbReference type="ChEBI" id="CHEBI:29108"/>
        <label>1</label>
    </ligand>
</feature>
<feature type="binding site" evidence="1">
    <location>
        <position position="204"/>
    </location>
    <ligand>
        <name>Ca(2+)</name>
        <dbReference type="ChEBI" id="CHEBI:29108"/>
        <label>2</label>
    </ligand>
</feature>
<feature type="binding site" evidence="1">
    <location>
        <position position="253"/>
    </location>
    <ligand>
        <name>Ca(2+)</name>
        <dbReference type="ChEBI" id="CHEBI:29108"/>
        <label>2</label>
    </ligand>
</feature>
<proteinExistence type="inferred from homology"/>